<dbReference type="EMBL" id="BX248355">
    <property type="protein sequence ID" value="CAE48941.1"/>
    <property type="molecule type" value="Genomic_DNA"/>
</dbReference>
<dbReference type="RefSeq" id="WP_004566661.1">
    <property type="nucleotide sequence ID" value="NC_002935.2"/>
</dbReference>
<dbReference type="SMR" id="Q6NJG6"/>
<dbReference type="STRING" id="257309.DIP0436"/>
<dbReference type="GeneID" id="29422378"/>
<dbReference type="KEGG" id="cdi:DIP0436"/>
<dbReference type="HOGENOM" id="CLU_092227_1_0_11"/>
<dbReference type="Proteomes" id="UP000002198">
    <property type="component" value="Chromosome"/>
</dbReference>
<dbReference type="GO" id="GO:0015934">
    <property type="term" value="C:large ribosomal subunit"/>
    <property type="evidence" value="ECO:0007669"/>
    <property type="project" value="InterPro"/>
</dbReference>
<dbReference type="GO" id="GO:0070180">
    <property type="term" value="F:large ribosomal subunit rRNA binding"/>
    <property type="evidence" value="ECO:0007669"/>
    <property type="project" value="UniProtKB-UniRule"/>
</dbReference>
<dbReference type="GO" id="GO:0003735">
    <property type="term" value="F:structural constituent of ribosome"/>
    <property type="evidence" value="ECO:0007669"/>
    <property type="project" value="InterPro"/>
</dbReference>
<dbReference type="GO" id="GO:0006412">
    <property type="term" value="P:translation"/>
    <property type="evidence" value="ECO:0007669"/>
    <property type="project" value="UniProtKB-UniRule"/>
</dbReference>
<dbReference type="CDD" id="cd05797">
    <property type="entry name" value="Ribosomal_L10"/>
    <property type="match status" value="1"/>
</dbReference>
<dbReference type="Gene3D" id="3.30.70.1730">
    <property type="match status" value="1"/>
</dbReference>
<dbReference type="HAMAP" id="MF_00362">
    <property type="entry name" value="Ribosomal_uL10"/>
    <property type="match status" value="1"/>
</dbReference>
<dbReference type="InterPro" id="IPR001790">
    <property type="entry name" value="Ribosomal_uL10"/>
</dbReference>
<dbReference type="InterPro" id="IPR043141">
    <property type="entry name" value="Ribosomal_uL10-like_sf"/>
</dbReference>
<dbReference type="InterPro" id="IPR022973">
    <property type="entry name" value="Ribosomal_uL10_bac"/>
</dbReference>
<dbReference type="InterPro" id="IPR047865">
    <property type="entry name" value="Ribosomal_uL10_bac_type"/>
</dbReference>
<dbReference type="InterPro" id="IPR002363">
    <property type="entry name" value="Ribosomal_uL10_CS_bac"/>
</dbReference>
<dbReference type="NCBIfam" id="NF000955">
    <property type="entry name" value="PRK00099.1-1"/>
    <property type="match status" value="1"/>
</dbReference>
<dbReference type="PANTHER" id="PTHR11560">
    <property type="entry name" value="39S RIBOSOMAL PROTEIN L10, MITOCHONDRIAL"/>
    <property type="match status" value="1"/>
</dbReference>
<dbReference type="Pfam" id="PF00466">
    <property type="entry name" value="Ribosomal_L10"/>
    <property type="match status" value="1"/>
</dbReference>
<dbReference type="SUPFAM" id="SSF160369">
    <property type="entry name" value="Ribosomal protein L10-like"/>
    <property type="match status" value="1"/>
</dbReference>
<dbReference type="PROSITE" id="PS01109">
    <property type="entry name" value="RIBOSOMAL_L10"/>
    <property type="match status" value="1"/>
</dbReference>
<organism>
    <name type="scientific">Corynebacterium diphtheriae (strain ATCC 700971 / NCTC 13129 / Biotype gravis)</name>
    <dbReference type="NCBI Taxonomy" id="257309"/>
    <lineage>
        <taxon>Bacteria</taxon>
        <taxon>Bacillati</taxon>
        <taxon>Actinomycetota</taxon>
        <taxon>Actinomycetes</taxon>
        <taxon>Mycobacteriales</taxon>
        <taxon>Corynebacteriaceae</taxon>
        <taxon>Corynebacterium</taxon>
    </lineage>
</organism>
<protein>
    <recommendedName>
        <fullName evidence="1">Large ribosomal subunit protein uL10</fullName>
    </recommendedName>
    <alternativeName>
        <fullName evidence="2">50S ribosomal protein L10</fullName>
    </alternativeName>
</protein>
<accession>Q6NJG6</accession>
<reference key="1">
    <citation type="journal article" date="2003" name="Nucleic Acids Res.">
        <title>The complete genome sequence and analysis of Corynebacterium diphtheriae NCTC13129.</title>
        <authorList>
            <person name="Cerdeno-Tarraga A.-M."/>
            <person name="Efstratiou A."/>
            <person name="Dover L.G."/>
            <person name="Holden M.T.G."/>
            <person name="Pallen M.J."/>
            <person name="Bentley S.D."/>
            <person name="Besra G.S."/>
            <person name="Churcher C.M."/>
            <person name="James K.D."/>
            <person name="De Zoysa A."/>
            <person name="Chillingworth T."/>
            <person name="Cronin A."/>
            <person name="Dowd L."/>
            <person name="Feltwell T."/>
            <person name="Hamlin N."/>
            <person name="Holroyd S."/>
            <person name="Jagels K."/>
            <person name="Moule S."/>
            <person name="Quail M.A."/>
            <person name="Rabbinowitsch E."/>
            <person name="Rutherford K.M."/>
            <person name="Thomson N.R."/>
            <person name="Unwin L."/>
            <person name="Whitehead S."/>
            <person name="Barrell B.G."/>
            <person name="Parkhill J."/>
        </authorList>
    </citation>
    <scope>NUCLEOTIDE SEQUENCE [LARGE SCALE GENOMIC DNA]</scope>
    <source>
        <strain>ATCC 700971 / NCTC 13129 / Biotype gravis</strain>
    </source>
</reference>
<feature type="chain" id="PRO_0000154620" description="Large ribosomal subunit protein uL10">
    <location>
        <begin position="1"/>
        <end position="171"/>
    </location>
</feature>
<name>RL10_CORDI</name>
<keyword id="KW-1185">Reference proteome</keyword>
<keyword id="KW-0687">Ribonucleoprotein</keyword>
<keyword id="KW-0689">Ribosomal protein</keyword>
<keyword id="KW-0694">RNA-binding</keyword>
<keyword id="KW-0699">rRNA-binding</keyword>
<proteinExistence type="inferred from homology"/>
<comment type="function">
    <text evidence="1">Forms part of the ribosomal stalk, playing a central role in the interaction of the ribosome with GTP-bound translation factors.</text>
</comment>
<comment type="subunit">
    <text evidence="1">Part of the ribosomal stalk of the 50S ribosomal subunit. The N-terminus interacts with L11 and the large rRNA to form the base of the stalk. The C-terminus forms an elongated spine to which L12 dimers bind in a sequential fashion forming a multimeric L10(L12)X complex.</text>
</comment>
<comment type="similarity">
    <text evidence="1">Belongs to the universal ribosomal protein uL10 family.</text>
</comment>
<sequence length="171" mass="17946">MANPKNTESLAELKNRFADIDSVFVTEYRGLTVAQITELRRALGSDVQYSVAKNTLIKLAAKEAGIEGLDDILTGPTAVAFIKGEAVDAAKAMKKFASENKAFVIKGGYMDGNALSAAQVDAIAELDNRETTLAKLAGAMKGNLAKAAGLFNAPASQVARLGAALQEKKEA</sequence>
<gene>
    <name evidence="1" type="primary">rplJ</name>
    <name type="ordered locus">DIP0436</name>
</gene>
<evidence type="ECO:0000255" key="1">
    <source>
        <dbReference type="HAMAP-Rule" id="MF_00362"/>
    </source>
</evidence>
<evidence type="ECO:0000305" key="2"/>